<gene>
    <name type="primary">KLHDC7A</name>
</gene>
<name>KLD7A_HUMAN</name>
<reference key="1">
    <citation type="journal article" date="2006" name="Nature">
        <title>The DNA sequence and biological annotation of human chromosome 1.</title>
        <authorList>
            <person name="Gregory S.G."/>
            <person name="Barlow K.F."/>
            <person name="McLay K.E."/>
            <person name="Kaul R."/>
            <person name="Swarbreck D."/>
            <person name="Dunham A."/>
            <person name="Scott C.E."/>
            <person name="Howe K.L."/>
            <person name="Woodfine K."/>
            <person name="Spencer C.C.A."/>
            <person name="Jones M.C."/>
            <person name="Gillson C."/>
            <person name="Searle S."/>
            <person name="Zhou Y."/>
            <person name="Kokocinski F."/>
            <person name="McDonald L."/>
            <person name="Evans R."/>
            <person name="Phillips K."/>
            <person name="Atkinson A."/>
            <person name="Cooper R."/>
            <person name="Jones C."/>
            <person name="Hall R.E."/>
            <person name="Andrews T.D."/>
            <person name="Lloyd C."/>
            <person name="Ainscough R."/>
            <person name="Almeida J.P."/>
            <person name="Ambrose K.D."/>
            <person name="Anderson F."/>
            <person name="Andrew R.W."/>
            <person name="Ashwell R.I.S."/>
            <person name="Aubin K."/>
            <person name="Babbage A.K."/>
            <person name="Bagguley C.L."/>
            <person name="Bailey J."/>
            <person name="Beasley H."/>
            <person name="Bethel G."/>
            <person name="Bird C.P."/>
            <person name="Bray-Allen S."/>
            <person name="Brown J.Y."/>
            <person name="Brown A.J."/>
            <person name="Buckley D."/>
            <person name="Burton J."/>
            <person name="Bye J."/>
            <person name="Carder C."/>
            <person name="Chapman J.C."/>
            <person name="Clark S.Y."/>
            <person name="Clarke G."/>
            <person name="Clee C."/>
            <person name="Cobley V."/>
            <person name="Collier R.E."/>
            <person name="Corby N."/>
            <person name="Coville G.J."/>
            <person name="Davies J."/>
            <person name="Deadman R."/>
            <person name="Dunn M."/>
            <person name="Earthrowl M."/>
            <person name="Ellington A.G."/>
            <person name="Errington H."/>
            <person name="Frankish A."/>
            <person name="Frankland J."/>
            <person name="French L."/>
            <person name="Garner P."/>
            <person name="Garnett J."/>
            <person name="Gay L."/>
            <person name="Ghori M.R.J."/>
            <person name="Gibson R."/>
            <person name="Gilby L.M."/>
            <person name="Gillett W."/>
            <person name="Glithero R.J."/>
            <person name="Grafham D.V."/>
            <person name="Griffiths C."/>
            <person name="Griffiths-Jones S."/>
            <person name="Grocock R."/>
            <person name="Hammond S."/>
            <person name="Harrison E.S.I."/>
            <person name="Hart E."/>
            <person name="Haugen E."/>
            <person name="Heath P.D."/>
            <person name="Holmes S."/>
            <person name="Holt K."/>
            <person name="Howden P.J."/>
            <person name="Hunt A.R."/>
            <person name="Hunt S.E."/>
            <person name="Hunter G."/>
            <person name="Isherwood J."/>
            <person name="James R."/>
            <person name="Johnson C."/>
            <person name="Johnson D."/>
            <person name="Joy A."/>
            <person name="Kay M."/>
            <person name="Kershaw J.K."/>
            <person name="Kibukawa M."/>
            <person name="Kimberley A.M."/>
            <person name="King A."/>
            <person name="Knights A.J."/>
            <person name="Lad H."/>
            <person name="Laird G."/>
            <person name="Lawlor S."/>
            <person name="Leongamornlert D.A."/>
            <person name="Lloyd D.M."/>
            <person name="Loveland J."/>
            <person name="Lovell J."/>
            <person name="Lush M.J."/>
            <person name="Lyne R."/>
            <person name="Martin S."/>
            <person name="Mashreghi-Mohammadi M."/>
            <person name="Matthews L."/>
            <person name="Matthews N.S.W."/>
            <person name="McLaren S."/>
            <person name="Milne S."/>
            <person name="Mistry S."/>
            <person name="Moore M.J.F."/>
            <person name="Nickerson T."/>
            <person name="O'Dell C.N."/>
            <person name="Oliver K."/>
            <person name="Palmeiri A."/>
            <person name="Palmer S.A."/>
            <person name="Parker A."/>
            <person name="Patel D."/>
            <person name="Pearce A.V."/>
            <person name="Peck A.I."/>
            <person name="Pelan S."/>
            <person name="Phelps K."/>
            <person name="Phillimore B.J."/>
            <person name="Plumb R."/>
            <person name="Rajan J."/>
            <person name="Raymond C."/>
            <person name="Rouse G."/>
            <person name="Saenphimmachak C."/>
            <person name="Sehra H.K."/>
            <person name="Sheridan E."/>
            <person name="Shownkeen R."/>
            <person name="Sims S."/>
            <person name="Skuce C.D."/>
            <person name="Smith M."/>
            <person name="Steward C."/>
            <person name="Subramanian S."/>
            <person name="Sycamore N."/>
            <person name="Tracey A."/>
            <person name="Tromans A."/>
            <person name="Van Helmond Z."/>
            <person name="Wall M."/>
            <person name="Wallis J.M."/>
            <person name="White S."/>
            <person name="Whitehead S.L."/>
            <person name="Wilkinson J.E."/>
            <person name="Willey D.L."/>
            <person name="Williams H."/>
            <person name="Wilming L."/>
            <person name="Wray P.W."/>
            <person name="Wu Z."/>
            <person name="Coulson A."/>
            <person name="Vaudin M."/>
            <person name="Sulston J.E."/>
            <person name="Durbin R.M."/>
            <person name="Hubbard T."/>
            <person name="Wooster R."/>
            <person name="Dunham I."/>
            <person name="Carter N.P."/>
            <person name="McVean G."/>
            <person name="Ross M.T."/>
            <person name="Harrow J."/>
            <person name="Olson M.V."/>
            <person name="Beck S."/>
            <person name="Rogers J."/>
            <person name="Bentley D.R."/>
        </authorList>
    </citation>
    <scope>NUCLEOTIDE SEQUENCE [LARGE SCALE GENOMIC DNA]</scope>
</reference>
<reference key="2">
    <citation type="journal article" date="2004" name="Nat. Genet.">
        <title>Complete sequencing and characterization of 21,243 full-length human cDNAs.</title>
        <authorList>
            <person name="Ota T."/>
            <person name="Suzuki Y."/>
            <person name="Nishikawa T."/>
            <person name="Otsuki T."/>
            <person name="Sugiyama T."/>
            <person name="Irie R."/>
            <person name="Wakamatsu A."/>
            <person name="Hayashi K."/>
            <person name="Sato H."/>
            <person name="Nagai K."/>
            <person name="Kimura K."/>
            <person name="Makita H."/>
            <person name="Sekine M."/>
            <person name="Obayashi M."/>
            <person name="Nishi T."/>
            <person name="Shibahara T."/>
            <person name="Tanaka T."/>
            <person name="Ishii S."/>
            <person name="Yamamoto J."/>
            <person name="Saito K."/>
            <person name="Kawai Y."/>
            <person name="Isono Y."/>
            <person name="Nakamura Y."/>
            <person name="Nagahari K."/>
            <person name="Murakami K."/>
            <person name="Yasuda T."/>
            <person name="Iwayanagi T."/>
            <person name="Wagatsuma M."/>
            <person name="Shiratori A."/>
            <person name="Sudo H."/>
            <person name="Hosoiri T."/>
            <person name="Kaku Y."/>
            <person name="Kodaira H."/>
            <person name="Kondo H."/>
            <person name="Sugawara M."/>
            <person name="Takahashi M."/>
            <person name="Kanda K."/>
            <person name="Yokoi T."/>
            <person name="Furuya T."/>
            <person name="Kikkawa E."/>
            <person name="Omura Y."/>
            <person name="Abe K."/>
            <person name="Kamihara K."/>
            <person name="Katsuta N."/>
            <person name="Sato K."/>
            <person name="Tanikawa M."/>
            <person name="Yamazaki M."/>
            <person name="Ninomiya K."/>
            <person name="Ishibashi T."/>
            <person name="Yamashita H."/>
            <person name="Murakawa K."/>
            <person name="Fujimori K."/>
            <person name="Tanai H."/>
            <person name="Kimata M."/>
            <person name="Watanabe M."/>
            <person name="Hiraoka S."/>
            <person name="Chiba Y."/>
            <person name="Ishida S."/>
            <person name="Ono Y."/>
            <person name="Takiguchi S."/>
            <person name="Watanabe S."/>
            <person name="Yosida M."/>
            <person name="Hotuta T."/>
            <person name="Kusano J."/>
            <person name="Kanehori K."/>
            <person name="Takahashi-Fujii A."/>
            <person name="Hara H."/>
            <person name="Tanase T.-O."/>
            <person name="Nomura Y."/>
            <person name="Togiya S."/>
            <person name="Komai F."/>
            <person name="Hara R."/>
            <person name="Takeuchi K."/>
            <person name="Arita M."/>
            <person name="Imose N."/>
            <person name="Musashino K."/>
            <person name="Yuuki H."/>
            <person name="Oshima A."/>
            <person name="Sasaki N."/>
            <person name="Aotsuka S."/>
            <person name="Yoshikawa Y."/>
            <person name="Matsunawa H."/>
            <person name="Ichihara T."/>
            <person name="Shiohata N."/>
            <person name="Sano S."/>
            <person name="Moriya S."/>
            <person name="Momiyama H."/>
            <person name="Satoh N."/>
            <person name="Takami S."/>
            <person name="Terashima Y."/>
            <person name="Suzuki O."/>
            <person name="Nakagawa S."/>
            <person name="Senoh A."/>
            <person name="Mizoguchi H."/>
            <person name="Goto Y."/>
            <person name="Shimizu F."/>
            <person name="Wakebe H."/>
            <person name="Hishigaki H."/>
            <person name="Watanabe T."/>
            <person name="Sugiyama A."/>
            <person name="Takemoto M."/>
            <person name="Kawakami B."/>
            <person name="Yamazaki M."/>
            <person name="Watanabe K."/>
            <person name="Kumagai A."/>
            <person name="Itakura S."/>
            <person name="Fukuzumi Y."/>
            <person name="Fujimori Y."/>
            <person name="Komiyama M."/>
            <person name="Tashiro H."/>
            <person name="Tanigami A."/>
            <person name="Fujiwara T."/>
            <person name="Ono T."/>
            <person name="Yamada K."/>
            <person name="Fujii Y."/>
            <person name="Ozaki K."/>
            <person name="Hirao M."/>
            <person name="Ohmori Y."/>
            <person name="Kawabata A."/>
            <person name="Hikiji T."/>
            <person name="Kobatake N."/>
            <person name="Inagaki H."/>
            <person name="Ikema Y."/>
            <person name="Okamoto S."/>
            <person name="Okitani R."/>
            <person name="Kawakami T."/>
            <person name="Noguchi S."/>
            <person name="Itoh T."/>
            <person name="Shigeta K."/>
            <person name="Senba T."/>
            <person name="Matsumura K."/>
            <person name="Nakajima Y."/>
            <person name="Mizuno T."/>
            <person name="Morinaga M."/>
            <person name="Sasaki M."/>
            <person name="Togashi T."/>
            <person name="Oyama M."/>
            <person name="Hata H."/>
            <person name="Watanabe M."/>
            <person name="Komatsu T."/>
            <person name="Mizushima-Sugano J."/>
            <person name="Satoh T."/>
            <person name="Shirai Y."/>
            <person name="Takahashi Y."/>
            <person name="Nakagawa K."/>
            <person name="Okumura K."/>
            <person name="Nagase T."/>
            <person name="Nomura N."/>
            <person name="Kikuchi H."/>
            <person name="Masuho Y."/>
            <person name="Yamashita R."/>
            <person name="Nakai K."/>
            <person name="Yada T."/>
            <person name="Nakamura Y."/>
            <person name="Ohara O."/>
            <person name="Isogai T."/>
            <person name="Sugano S."/>
        </authorList>
    </citation>
    <scope>NUCLEOTIDE SEQUENCE [LARGE SCALE MRNA] OF 131-777</scope>
    <scope>VARIANTS ASN-273 AND PRO-351</scope>
    <source>
        <tissue>Kidney</tissue>
    </source>
</reference>
<reference key="3">
    <citation type="journal article" date="2014" name="J. Proteomics">
        <title>An enzyme assisted RP-RPLC approach for in-depth analysis of human liver phosphoproteome.</title>
        <authorList>
            <person name="Bian Y."/>
            <person name="Song C."/>
            <person name="Cheng K."/>
            <person name="Dong M."/>
            <person name="Wang F."/>
            <person name="Huang J."/>
            <person name="Sun D."/>
            <person name="Wang L."/>
            <person name="Ye M."/>
            <person name="Zou H."/>
        </authorList>
    </citation>
    <scope>PHOSPHORYLATION [LARGE SCALE ANALYSIS] AT SER-365</scope>
    <scope>IDENTIFICATION BY MASS SPECTROMETRY [LARGE SCALE ANALYSIS]</scope>
    <source>
        <tissue>Liver</tissue>
    </source>
</reference>
<accession>Q5VTJ3</accession>
<accession>Q8N8W6</accession>
<sequence length="777" mass="84479">MFPRGAEAQDWHLDMQLTGKVVLSAAALLLVTVAYRLYKSRPAPAQRWGGNGQAEAKEEAEGSGQPAVQEASPGVLLRGPRRRRSSKRAEAPQGCSCENPRGPYVLVTGATSTDRKPQRKGSGEERGGQGSDSEQVPPCCPSQETRTAVGSNPDPPHFPRLGSEPKSSPAGLIAAADGSCAGGEPSPWQDSKPREHPGLGQLEPPHCHYVAPLQGSSDMNQSWVFTRVIGVSREEAGALEAASDVDLTLHQQEGAPNSSYTFSSIARVRMEEHFIQKAEGVEPRLKGKVYDYYVESTSQAIFQGRLAPRTAALTEVPSPRPPPGSLGTGAASGGQAGDTKGAAERAASPQTGPWPSTRGFSRKESLLQIAENPELQLQPDGFRLPAPPCPDPGALPGLGRSSREPHVQPVAGTNFFHIPLTPASAPQVRLDLGNCYEVLTLAKRQNLEALKEAAYKVMSENYLQVLRSPDIYGCLSGAERELILQRRLRGRQYLVVADVCPKEDSGGLCCYDDEQDVWRPLARMPPEAVSRGCAICSLFNYLFVVSGCQGPGHQPSSRVFCYNPLTGIWSEVCPLNQARPHCRLVALDGHLYAIGGECLNSVERYDPRLDRWDFAPPLPSDTFALAHTATVRAKEIFVTGGSLRFLLFRFSAQEQRWWAGPTGGSKDRTAEMVAVNGFLYRFDLNRSLGIAVYRCSASTRLWYECATYRTPYPDAFQCAVVDNLIYCVGRRSTLCFLADSVSPRFVPKELRSFPAPQGTLLPTVLTLPTPDLPQTRV</sequence>
<organism>
    <name type="scientific">Homo sapiens</name>
    <name type="common">Human</name>
    <dbReference type="NCBI Taxonomy" id="9606"/>
    <lineage>
        <taxon>Eukaryota</taxon>
        <taxon>Metazoa</taxon>
        <taxon>Chordata</taxon>
        <taxon>Craniata</taxon>
        <taxon>Vertebrata</taxon>
        <taxon>Euteleostomi</taxon>
        <taxon>Mammalia</taxon>
        <taxon>Eutheria</taxon>
        <taxon>Euarchontoglires</taxon>
        <taxon>Primates</taxon>
        <taxon>Haplorrhini</taxon>
        <taxon>Catarrhini</taxon>
        <taxon>Hominidae</taxon>
        <taxon>Homo</taxon>
    </lineage>
</organism>
<keyword id="KW-0325">Glycoprotein</keyword>
<keyword id="KW-0880">Kelch repeat</keyword>
<keyword id="KW-0472">Membrane</keyword>
<keyword id="KW-0597">Phosphoprotein</keyword>
<keyword id="KW-1267">Proteomics identification</keyword>
<keyword id="KW-1185">Reference proteome</keyword>
<keyword id="KW-0677">Repeat</keyword>
<keyword id="KW-0812">Transmembrane</keyword>
<keyword id="KW-1133">Transmembrane helix</keyword>
<comment type="subcellular location">
    <subcellularLocation>
        <location evidence="5">Membrane</location>
        <topology evidence="5">Single-pass membrane protein</topology>
    </subcellularLocation>
</comment>
<comment type="sequence caution" evidence="5">
    <conflict type="erroneous initiation">
        <sequence resource="EMBL-CDS" id="BAC04695"/>
    </conflict>
</comment>
<feature type="chain" id="PRO_0000285085" description="Kelch domain-containing protein 7A">
    <location>
        <begin position="1"/>
        <end position="777"/>
    </location>
</feature>
<feature type="transmembrane region" description="Helical" evidence="2">
    <location>
        <begin position="21"/>
        <end position="38"/>
    </location>
</feature>
<feature type="repeat" description="Kelch 1">
    <location>
        <begin position="328"/>
        <end position="374"/>
    </location>
</feature>
<feature type="repeat" description="Kelch 2">
    <location>
        <begin position="492"/>
        <end position="538"/>
    </location>
</feature>
<feature type="repeat" description="Kelch 3">
    <location>
        <begin position="541"/>
        <end position="589"/>
    </location>
</feature>
<feature type="repeat" description="Kelch 4">
    <location>
        <begin position="590"/>
        <end position="632"/>
    </location>
</feature>
<feature type="repeat" description="Kelch 5">
    <location>
        <begin position="635"/>
        <end position="677"/>
    </location>
</feature>
<feature type="region of interest" description="Disordered" evidence="3">
    <location>
        <begin position="43"/>
        <end position="207"/>
    </location>
</feature>
<feature type="region of interest" description="Disordered" evidence="3">
    <location>
        <begin position="313"/>
        <end position="359"/>
    </location>
</feature>
<feature type="compositionally biased region" description="Basic and acidic residues" evidence="3">
    <location>
        <begin position="113"/>
        <end position="127"/>
    </location>
</feature>
<feature type="compositionally biased region" description="Gly residues" evidence="3">
    <location>
        <begin position="326"/>
        <end position="336"/>
    </location>
</feature>
<feature type="modified residue" description="Phosphoserine" evidence="1">
    <location>
        <position position="86"/>
    </location>
</feature>
<feature type="modified residue" description="Phosphoserine" evidence="6">
    <location>
        <position position="365"/>
    </location>
</feature>
<feature type="glycosylation site" description="N-linked (GlcNAc...) asparagine" evidence="2">
    <location>
        <position position="257"/>
    </location>
</feature>
<feature type="sequence variant" id="VAR_056126" description="In dbSNP:rs7512414.">
    <original>V</original>
    <variation>L</variation>
    <location>
        <position position="21"/>
    </location>
</feature>
<feature type="sequence variant" id="VAR_061341" description="In dbSNP:rs34976233.">
    <original>G</original>
    <variation>S</variation>
    <location>
        <position position="94"/>
    </location>
</feature>
<feature type="sequence variant" id="VAR_061342" description="In dbSNP:rs2992755.">
    <original>P</original>
    <variation>R</variation>
    <location>
        <position position="141"/>
    </location>
</feature>
<feature type="sequence variant" id="VAR_031913" description="In dbSNP:rs2992752.">
    <original>T</original>
    <variation>P</variation>
    <location>
        <position position="147"/>
    </location>
</feature>
<feature type="sequence variant" id="VAR_059441" description="In dbSNP:rs11261022.">
    <original>R</original>
    <variation>S</variation>
    <location>
        <position position="160"/>
    </location>
</feature>
<feature type="sequence variant" id="VAR_056127" description="In dbSNP:rs7515150.">
    <original>R</original>
    <variation>P</variation>
    <location>
        <position position="194"/>
    </location>
</feature>
<feature type="sequence variant" id="VAR_031914" description="In dbSNP:rs2992753." evidence="4">
    <original>H</original>
    <variation>N</variation>
    <location>
        <position position="273"/>
    </location>
</feature>
<feature type="sequence variant" id="VAR_059442" description="In dbSNP:rs2992752." evidence="4">
    <original>T</original>
    <variation>P</variation>
    <location>
        <position position="351"/>
    </location>
</feature>
<protein>
    <recommendedName>
        <fullName>Kelch domain-containing protein 7A</fullName>
    </recommendedName>
</protein>
<evidence type="ECO:0000250" key="1">
    <source>
        <dbReference type="UniProtKB" id="A2APT9"/>
    </source>
</evidence>
<evidence type="ECO:0000255" key="2"/>
<evidence type="ECO:0000256" key="3">
    <source>
        <dbReference type="SAM" id="MobiDB-lite"/>
    </source>
</evidence>
<evidence type="ECO:0000269" key="4">
    <source>
    </source>
</evidence>
<evidence type="ECO:0000305" key="5"/>
<evidence type="ECO:0007744" key="6">
    <source>
    </source>
</evidence>
<dbReference type="EMBL" id="AL591896">
    <property type="status" value="NOT_ANNOTATED_CDS"/>
    <property type="molecule type" value="Genomic_DNA"/>
</dbReference>
<dbReference type="EMBL" id="AK096072">
    <property type="protein sequence ID" value="BAC04695.1"/>
    <property type="status" value="ALT_INIT"/>
    <property type="molecule type" value="mRNA"/>
</dbReference>
<dbReference type="CCDS" id="CCDS185.2"/>
<dbReference type="RefSeq" id="NP_689588.2">
    <property type="nucleotide sequence ID" value="NM_152375.3"/>
</dbReference>
<dbReference type="SMR" id="Q5VTJ3"/>
<dbReference type="BioGRID" id="126080">
    <property type="interactions" value="1"/>
</dbReference>
<dbReference type="FunCoup" id="Q5VTJ3">
    <property type="interactions" value="2"/>
</dbReference>
<dbReference type="STRING" id="9606.ENSP00000383505"/>
<dbReference type="GlyCosmos" id="Q5VTJ3">
    <property type="glycosylation" value="1 site, No reported glycans"/>
</dbReference>
<dbReference type="GlyGen" id="Q5VTJ3">
    <property type="glycosylation" value="3 sites, 1 O-linked glycan (1 site)"/>
</dbReference>
<dbReference type="iPTMnet" id="Q5VTJ3"/>
<dbReference type="PhosphoSitePlus" id="Q5VTJ3"/>
<dbReference type="BioMuta" id="KLHDC7A"/>
<dbReference type="DMDM" id="238054405"/>
<dbReference type="jPOST" id="Q5VTJ3"/>
<dbReference type="MassIVE" id="Q5VTJ3"/>
<dbReference type="PaxDb" id="9606-ENSP00000383505"/>
<dbReference type="PeptideAtlas" id="Q5VTJ3"/>
<dbReference type="ProteomicsDB" id="65333"/>
<dbReference type="Antibodypedia" id="64774">
    <property type="antibodies" value="5 antibodies from 5 providers"/>
</dbReference>
<dbReference type="DNASU" id="127707"/>
<dbReference type="Ensembl" id="ENST00000400664.3">
    <property type="protein sequence ID" value="ENSP00000383505.1"/>
    <property type="gene ID" value="ENSG00000179023.9"/>
</dbReference>
<dbReference type="GeneID" id="127707"/>
<dbReference type="KEGG" id="hsa:127707"/>
<dbReference type="MANE-Select" id="ENST00000400664.3">
    <property type="protein sequence ID" value="ENSP00000383505.1"/>
    <property type="RefSeq nucleotide sequence ID" value="NM_152375.3"/>
    <property type="RefSeq protein sequence ID" value="NP_689588.2"/>
</dbReference>
<dbReference type="UCSC" id="uc001bax.4">
    <property type="organism name" value="human"/>
</dbReference>
<dbReference type="AGR" id="HGNC:26791"/>
<dbReference type="CTD" id="127707"/>
<dbReference type="DisGeNET" id="127707"/>
<dbReference type="GeneCards" id="KLHDC7A"/>
<dbReference type="HGNC" id="HGNC:26791">
    <property type="gene designation" value="KLHDC7A"/>
</dbReference>
<dbReference type="HPA" id="ENSG00000179023">
    <property type="expression patterns" value="Tissue enhanced (kidney)"/>
</dbReference>
<dbReference type="neXtProt" id="NX_Q5VTJ3"/>
<dbReference type="OpenTargets" id="ENSG00000179023"/>
<dbReference type="PharmGKB" id="PA142671581"/>
<dbReference type="VEuPathDB" id="HostDB:ENSG00000179023"/>
<dbReference type="eggNOG" id="KOG1072">
    <property type="taxonomic scope" value="Eukaryota"/>
</dbReference>
<dbReference type="GeneTree" id="ENSGT00940000162724"/>
<dbReference type="HOGENOM" id="CLU_020313_1_0_1"/>
<dbReference type="InParanoid" id="Q5VTJ3"/>
<dbReference type="OMA" id="GTNFFHI"/>
<dbReference type="OrthoDB" id="45365at2759"/>
<dbReference type="PAN-GO" id="Q5VTJ3">
    <property type="GO annotations" value="0 GO annotations based on evolutionary models"/>
</dbReference>
<dbReference type="PhylomeDB" id="Q5VTJ3"/>
<dbReference type="TreeFam" id="TF328485"/>
<dbReference type="PathwayCommons" id="Q5VTJ3"/>
<dbReference type="BioGRID-ORCS" id="127707">
    <property type="hits" value="14 hits in 1145 CRISPR screens"/>
</dbReference>
<dbReference type="ChiTaRS" id="KLHDC7A">
    <property type="organism name" value="human"/>
</dbReference>
<dbReference type="GenomeRNAi" id="127707"/>
<dbReference type="Pharos" id="Q5VTJ3">
    <property type="development level" value="Tdark"/>
</dbReference>
<dbReference type="PRO" id="PR:Q5VTJ3"/>
<dbReference type="Proteomes" id="UP000005640">
    <property type="component" value="Chromosome 1"/>
</dbReference>
<dbReference type="RNAct" id="Q5VTJ3">
    <property type="molecule type" value="protein"/>
</dbReference>
<dbReference type="Bgee" id="ENSG00000179023">
    <property type="expression patterns" value="Expressed in secondary oocyte and 70 other cell types or tissues"/>
</dbReference>
<dbReference type="GO" id="GO:0016020">
    <property type="term" value="C:membrane"/>
    <property type="evidence" value="ECO:0007669"/>
    <property type="project" value="UniProtKB-SubCell"/>
</dbReference>
<dbReference type="CDD" id="cd18484">
    <property type="entry name" value="BACK_KBTBD11_CMLAP"/>
    <property type="match status" value="1"/>
</dbReference>
<dbReference type="Gene3D" id="2.120.10.80">
    <property type="entry name" value="Kelch-type beta propeller"/>
    <property type="match status" value="1"/>
</dbReference>
<dbReference type="InterPro" id="IPR015915">
    <property type="entry name" value="Kelch-typ_b-propeller"/>
</dbReference>
<dbReference type="InterPro" id="IPR052310">
    <property type="entry name" value="Kelch/BTB_domain_protein"/>
</dbReference>
<dbReference type="InterPro" id="IPR006652">
    <property type="entry name" value="Kelch_1"/>
</dbReference>
<dbReference type="PANTHER" id="PTHR45972">
    <property type="entry name" value="BTB_2 DOMAIN-CONTAINING PROTEIN"/>
    <property type="match status" value="1"/>
</dbReference>
<dbReference type="PANTHER" id="PTHR45972:SF1">
    <property type="entry name" value="KELCH DOMAIN-CONTAINING PROTEIN 7A"/>
    <property type="match status" value="1"/>
</dbReference>
<dbReference type="Pfam" id="PF01344">
    <property type="entry name" value="Kelch_1"/>
    <property type="match status" value="2"/>
</dbReference>
<dbReference type="SMART" id="SM00612">
    <property type="entry name" value="Kelch"/>
    <property type="match status" value="2"/>
</dbReference>
<dbReference type="SUPFAM" id="SSF117281">
    <property type="entry name" value="Kelch motif"/>
    <property type="match status" value="1"/>
</dbReference>
<proteinExistence type="evidence at protein level"/>